<sequence length="193" mass="21353">MLLIAGLGNPGSHYQNNRHNIGFMAVDAIHEAFSFSPWSKKFQAEVSNGLINGEKILLIKPQTFMNLSGQAIGEALRFYKLDLDHLIVFYDELDLPPGTVRVKIGGRSNGHNGIKSIDSHCGNNYHHVRLGIGRPISKELVDQYVLGNFTQSDQKWLSTLLGVIANNVAMLIKGDSNCFMNKISLTMKSQGLQ</sequence>
<proteinExistence type="inferred from homology"/>
<feature type="chain" id="PRO_1000010564" description="Peptidyl-tRNA hydrolase">
    <location>
        <begin position="1"/>
        <end position="193"/>
    </location>
</feature>
<feature type="active site" description="Proton acceptor" evidence="1">
    <location>
        <position position="19"/>
    </location>
</feature>
<feature type="binding site" evidence="1">
    <location>
        <position position="14"/>
    </location>
    <ligand>
        <name>tRNA</name>
        <dbReference type="ChEBI" id="CHEBI:17843"/>
    </ligand>
</feature>
<feature type="binding site" evidence="1">
    <location>
        <position position="64"/>
    </location>
    <ligand>
        <name>tRNA</name>
        <dbReference type="ChEBI" id="CHEBI:17843"/>
    </ligand>
</feature>
<feature type="binding site" evidence="1">
    <location>
        <position position="66"/>
    </location>
    <ligand>
        <name>tRNA</name>
        <dbReference type="ChEBI" id="CHEBI:17843"/>
    </ligand>
</feature>
<feature type="binding site" evidence="1">
    <location>
        <position position="112"/>
    </location>
    <ligand>
        <name>tRNA</name>
        <dbReference type="ChEBI" id="CHEBI:17843"/>
    </ligand>
</feature>
<feature type="site" description="Discriminates between blocked and unblocked aminoacyl-tRNA" evidence="1">
    <location>
        <position position="9"/>
    </location>
</feature>
<feature type="site" description="Stabilizes the basic form of H active site to accept a proton" evidence="1">
    <location>
        <position position="91"/>
    </location>
</feature>
<keyword id="KW-0963">Cytoplasm</keyword>
<keyword id="KW-0378">Hydrolase</keyword>
<keyword id="KW-0694">RNA-binding</keyword>
<keyword id="KW-0820">tRNA-binding</keyword>
<evidence type="ECO:0000255" key="1">
    <source>
        <dbReference type="HAMAP-Rule" id="MF_00083"/>
    </source>
</evidence>
<protein>
    <recommendedName>
        <fullName evidence="1">Peptidyl-tRNA hydrolase</fullName>
        <shortName evidence="1">Pth</shortName>
        <ecNumber evidence="1">3.1.1.29</ecNumber>
    </recommendedName>
</protein>
<gene>
    <name evidence="1" type="primary">pth</name>
    <name type="ordered locus">BARBAKC583_1000</name>
</gene>
<reference key="1">
    <citation type="submission" date="2006-12" db="EMBL/GenBank/DDBJ databases">
        <authorList>
            <person name="Hendrix L."/>
            <person name="Mohamoud Y."/>
            <person name="Radune D."/>
            <person name="Shvartsbeyn A."/>
            <person name="Daugherty S."/>
            <person name="Dodson R."/>
            <person name="Durkin A.S."/>
            <person name="Harkins D."/>
            <person name="Huot H."/>
            <person name="Kothari S.P."/>
            <person name="Madupu R."/>
            <person name="Li J."/>
            <person name="Nelson W.C."/>
            <person name="Shrivastava S."/>
            <person name="Giglio M.G."/>
            <person name="Haft D."/>
            <person name="Selengut J."/>
            <person name="Fraser-Ligget C."/>
            <person name="Seshadri R."/>
        </authorList>
    </citation>
    <scope>NUCLEOTIDE SEQUENCE [LARGE SCALE GENOMIC DNA]</scope>
    <source>
        <strain>ATCC 35685 / KC583 / Herrer 020/F12,63</strain>
    </source>
</reference>
<organism>
    <name type="scientific">Bartonella bacilliformis (strain ATCC 35685 / KC583 / Herrer 020/F12,63)</name>
    <dbReference type="NCBI Taxonomy" id="360095"/>
    <lineage>
        <taxon>Bacteria</taxon>
        <taxon>Pseudomonadati</taxon>
        <taxon>Pseudomonadota</taxon>
        <taxon>Alphaproteobacteria</taxon>
        <taxon>Hyphomicrobiales</taxon>
        <taxon>Bartonellaceae</taxon>
        <taxon>Bartonella</taxon>
    </lineage>
</organism>
<accession>A1UTH5</accession>
<comment type="function">
    <text evidence="1">Hydrolyzes ribosome-free peptidyl-tRNAs (with 1 or more amino acids incorporated), which drop off the ribosome during protein synthesis, or as a result of ribosome stalling.</text>
</comment>
<comment type="function">
    <text evidence="1">Catalyzes the release of premature peptidyl moieties from peptidyl-tRNA molecules trapped in stalled 50S ribosomal subunits, and thus maintains levels of free tRNAs and 50S ribosomes.</text>
</comment>
<comment type="catalytic activity">
    <reaction evidence="1">
        <text>an N-acyl-L-alpha-aminoacyl-tRNA + H2O = an N-acyl-L-amino acid + a tRNA + H(+)</text>
        <dbReference type="Rhea" id="RHEA:54448"/>
        <dbReference type="Rhea" id="RHEA-COMP:10123"/>
        <dbReference type="Rhea" id="RHEA-COMP:13883"/>
        <dbReference type="ChEBI" id="CHEBI:15377"/>
        <dbReference type="ChEBI" id="CHEBI:15378"/>
        <dbReference type="ChEBI" id="CHEBI:59874"/>
        <dbReference type="ChEBI" id="CHEBI:78442"/>
        <dbReference type="ChEBI" id="CHEBI:138191"/>
        <dbReference type="EC" id="3.1.1.29"/>
    </reaction>
</comment>
<comment type="subunit">
    <text evidence="1">Monomer.</text>
</comment>
<comment type="subcellular location">
    <subcellularLocation>
        <location evidence="1">Cytoplasm</location>
    </subcellularLocation>
</comment>
<comment type="similarity">
    <text evidence="1">Belongs to the PTH family.</text>
</comment>
<dbReference type="EC" id="3.1.1.29" evidence="1"/>
<dbReference type="EMBL" id="CP000524">
    <property type="protein sequence ID" value="ABM45422.1"/>
    <property type="molecule type" value="Genomic_DNA"/>
</dbReference>
<dbReference type="RefSeq" id="WP_005767523.1">
    <property type="nucleotide sequence ID" value="NC_008783.1"/>
</dbReference>
<dbReference type="SMR" id="A1UTH5"/>
<dbReference type="STRING" id="360095.BARBAKC583_1000"/>
<dbReference type="GeneID" id="4684689"/>
<dbReference type="KEGG" id="bbk:BARBAKC583_1000"/>
<dbReference type="PATRIC" id="fig|360095.6.peg.968"/>
<dbReference type="eggNOG" id="COG0193">
    <property type="taxonomic scope" value="Bacteria"/>
</dbReference>
<dbReference type="HOGENOM" id="CLU_062456_1_0_5"/>
<dbReference type="OrthoDB" id="9800507at2"/>
<dbReference type="Proteomes" id="UP000000643">
    <property type="component" value="Chromosome"/>
</dbReference>
<dbReference type="GO" id="GO:0005737">
    <property type="term" value="C:cytoplasm"/>
    <property type="evidence" value="ECO:0007669"/>
    <property type="project" value="UniProtKB-SubCell"/>
</dbReference>
<dbReference type="GO" id="GO:0004045">
    <property type="term" value="F:peptidyl-tRNA hydrolase activity"/>
    <property type="evidence" value="ECO:0007669"/>
    <property type="project" value="UniProtKB-UniRule"/>
</dbReference>
<dbReference type="GO" id="GO:0000049">
    <property type="term" value="F:tRNA binding"/>
    <property type="evidence" value="ECO:0007669"/>
    <property type="project" value="UniProtKB-UniRule"/>
</dbReference>
<dbReference type="GO" id="GO:0006515">
    <property type="term" value="P:protein quality control for misfolded or incompletely synthesized proteins"/>
    <property type="evidence" value="ECO:0007669"/>
    <property type="project" value="UniProtKB-UniRule"/>
</dbReference>
<dbReference type="GO" id="GO:0072344">
    <property type="term" value="P:rescue of stalled ribosome"/>
    <property type="evidence" value="ECO:0007669"/>
    <property type="project" value="UniProtKB-UniRule"/>
</dbReference>
<dbReference type="CDD" id="cd00462">
    <property type="entry name" value="PTH"/>
    <property type="match status" value="1"/>
</dbReference>
<dbReference type="FunFam" id="3.40.50.1470:FF:000001">
    <property type="entry name" value="Peptidyl-tRNA hydrolase"/>
    <property type="match status" value="1"/>
</dbReference>
<dbReference type="Gene3D" id="3.40.50.1470">
    <property type="entry name" value="Peptidyl-tRNA hydrolase"/>
    <property type="match status" value="1"/>
</dbReference>
<dbReference type="HAMAP" id="MF_00083">
    <property type="entry name" value="Pept_tRNA_hydro_bact"/>
    <property type="match status" value="1"/>
</dbReference>
<dbReference type="InterPro" id="IPR001328">
    <property type="entry name" value="Pept_tRNA_hydro"/>
</dbReference>
<dbReference type="InterPro" id="IPR018171">
    <property type="entry name" value="Pept_tRNA_hydro_CS"/>
</dbReference>
<dbReference type="InterPro" id="IPR036416">
    <property type="entry name" value="Pept_tRNA_hydro_sf"/>
</dbReference>
<dbReference type="NCBIfam" id="TIGR00447">
    <property type="entry name" value="pth"/>
    <property type="match status" value="1"/>
</dbReference>
<dbReference type="PANTHER" id="PTHR17224">
    <property type="entry name" value="PEPTIDYL-TRNA HYDROLASE"/>
    <property type="match status" value="1"/>
</dbReference>
<dbReference type="PANTHER" id="PTHR17224:SF1">
    <property type="entry name" value="PEPTIDYL-TRNA HYDROLASE"/>
    <property type="match status" value="1"/>
</dbReference>
<dbReference type="Pfam" id="PF01195">
    <property type="entry name" value="Pept_tRNA_hydro"/>
    <property type="match status" value="1"/>
</dbReference>
<dbReference type="SUPFAM" id="SSF53178">
    <property type="entry name" value="Peptidyl-tRNA hydrolase-like"/>
    <property type="match status" value="1"/>
</dbReference>
<dbReference type="PROSITE" id="PS01195">
    <property type="entry name" value="PEPT_TRNA_HYDROL_1"/>
    <property type="match status" value="1"/>
</dbReference>
<name>PTH_BARBK</name>